<feature type="chain" id="PRO_1000049953" description="Gamma-glutamyl phosphate reductase">
    <location>
        <begin position="1"/>
        <end position="417"/>
    </location>
</feature>
<gene>
    <name evidence="1" type="primary">proA</name>
    <name type="ordered locus">CGSHiGG_01815</name>
</gene>
<sequence length="417" mass="45405">MLEQMGKQAKDAAFILAQLTTAEKNCALSIIAEQLEQQAPLILAENAKDIELAKQNGLSDALIDRLLLTQERLQGIANDVRHVISLADPVGKIIDGGTLDSGLKIERVRTPLGVIGTIYEARPNVTIDVASLCLKTGNAVILRGGKETQFSNKILIEVVQNALEQAGLPKFAVQAITDPNRELVMQLLKLDRYVDMIIPRGGAGLHELCKQHSTIPVIVGGVGVCHIFVEKSADQNKAVFVIDNAKTQRPSTCNTLETLLVQHSIAEEFLPKLVSHLSAKNVKYHAKSTALNILKQAGANVCEVTEKELRKEWGSLDLNVVVVEDIHAAIEHIRQYGTQHSESILTSSQNLARQFINQVDAAAVYVNASTRFTDGGQFGLGAEVAVSTQKLHARGPMGLEALTSYKWVCEGEYTVRK</sequence>
<comment type="function">
    <text evidence="1">Catalyzes the NADPH-dependent reduction of L-glutamate 5-phosphate into L-glutamate 5-semialdehyde and phosphate. The product spontaneously undergoes cyclization to form 1-pyrroline-5-carboxylate.</text>
</comment>
<comment type="catalytic activity">
    <reaction evidence="1">
        <text>L-glutamate 5-semialdehyde + phosphate + NADP(+) = L-glutamyl 5-phosphate + NADPH + H(+)</text>
        <dbReference type="Rhea" id="RHEA:19541"/>
        <dbReference type="ChEBI" id="CHEBI:15378"/>
        <dbReference type="ChEBI" id="CHEBI:43474"/>
        <dbReference type="ChEBI" id="CHEBI:57783"/>
        <dbReference type="ChEBI" id="CHEBI:58066"/>
        <dbReference type="ChEBI" id="CHEBI:58274"/>
        <dbReference type="ChEBI" id="CHEBI:58349"/>
        <dbReference type="EC" id="1.2.1.41"/>
    </reaction>
</comment>
<comment type="pathway">
    <text evidence="1">Amino-acid biosynthesis; L-proline biosynthesis; L-glutamate 5-semialdehyde from L-glutamate: step 2/2.</text>
</comment>
<comment type="subcellular location">
    <subcellularLocation>
        <location evidence="1">Cytoplasm</location>
    </subcellularLocation>
</comment>
<comment type="similarity">
    <text evidence="1">Belongs to the gamma-glutamyl phosphate reductase family.</text>
</comment>
<keyword id="KW-0028">Amino-acid biosynthesis</keyword>
<keyword id="KW-0963">Cytoplasm</keyword>
<keyword id="KW-0521">NADP</keyword>
<keyword id="KW-0560">Oxidoreductase</keyword>
<keyword id="KW-0641">Proline biosynthesis</keyword>
<evidence type="ECO:0000255" key="1">
    <source>
        <dbReference type="HAMAP-Rule" id="MF_00412"/>
    </source>
</evidence>
<dbReference type="EC" id="1.2.1.41" evidence="1"/>
<dbReference type="EMBL" id="CP000672">
    <property type="protein sequence ID" value="ABQ99421.1"/>
    <property type="molecule type" value="Genomic_DNA"/>
</dbReference>
<dbReference type="SMR" id="A5UF66"/>
<dbReference type="KEGG" id="hiq:CGSHiGG_01815"/>
<dbReference type="HOGENOM" id="CLU_030231_0_0_6"/>
<dbReference type="UniPathway" id="UPA00098">
    <property type="reaction ID" value="UER00360"/>
</dbReference>
<dbReference type="Proteomes" id="UP000001990">
    <property type="component" value="Chromosome"/>
</dbReference>
<dbReference type="GO" id="GO:0005737">
    <property type="term" value="C:cytoplasm"/>
    <property type="evidence" value="ECO:0007669"/>
    <property type="project" value="UniProtKB-SubCell"/>
</dbReference>
<dbReference type="GO" id="GO:0004350">
    <property type="term" value="F:glutamate-5-semialdehyde dehydrogenase activity"/>
    <property type="evidence" value="ECO:0007669"/>
    <property type="project" value="UniProtKB-UniRule"/>
</dbReference>
<dbReference type="GO" id="GO:0050661">
    <property type="term" value="F:NADP binding"/>
    <property type="evidence" value="ECO:0007669"/>
    <property type="project" value="InterPro"/>
</dbReference>
<dbReference type="GO" id="GO:0055129">
    <property type="term" value="P:L-proline biosynthetic process"/>
    <property type="evidence" value="ECO:0007669"/>
    <property type="project" value="UniProtKB-UniRule"/>
</dbReference>
<dbReference type="CDD" id="cd07079">
    <property type="entry name" value="ALDH_F18-19_ProA-GPR"/>
    <property type="match status" value="1"/>
</dbReference>
<dbReference type="FunFam" id="3.40.309.10:FF:000028">
    <property type="entry name" value="Gamma-glutamyl phosphate reductase"/>
    <property type="match status" value="1"/>
</dbReference>
<dbReference type="Gene3D" id="3.40.605.10">
    <property type="entry name" value="Aldehyde Dehydrogenase, Chain A, domain 1"/>
    <property type="match status" value="1"/>
</dbReference>
<dbReference type="Gene3D" id="3.40.309.10">
    <property type="entry name" value="Aldehyde Dehydrogenase, Chain A, domain 2"/>
    <property type="match status" value="1"/>
</dbReference>
<dbReference type="HAMAP" id="MF_00412">
    <property type="entry name" value="ProA"/>
    <property type="match status" value="1"/>
</dbReference>
<dbReference type="InterPro" id="IPR016161">
    <property type="entry name" value="Ald_DH/histidinol_DH"/>
</dbReference>
<dbReference type="InterPro" id="IPR016163">
    <property type="entry name" value="Ald_DH_C"/>
</dbReference>
<dbReference type="InterPro" id="IPR016162">
    <property type="entry name" value="Ald_DH_N"/>
</dbReference>
<dbReference type="InterPro" id="IPR015590">
    <property type="entry name" value="Aldehyde_DH_dom"/>
</dbReference>
<dbReference type="InterPro" id="IPR020593">
    <property type="entry name" value="G-glutamylP_reductase_CS"/>
</dbReference>
<dbReference type="InterPro" id="IPR012134">
    <property type="entry name" value="Glu-5-SA_DH"/>
</dbReference>
<dbReference type="InterPro" id="IPR000965">
    <property type="entry name" value="GPR_dom"/>
</dbReference>
<dbReference type="NCBIfam" id="NF001221">
    <property type="entry name" value="PRK00197.1"/>
    <property type="match status" value="1"/>
</dbReference>
<dbReference type="NCBIfam" id="TIGR00407">
    <property type="entry name" value="proA"/>
    <property type="match status" value="1"/>
</dbReference>
<dbReference type="PANTHER" id="PTHR11063:SF8">
    <property type="entry name" value="DELTA-1-PYRROLINE-5-CARBOXYLATE SYNTHASE"/>
    <property type="match status" value="1"/>
</dbReference>
<dbReference type="PANTHER" id="PTHR11063">
    <property type="entry name" value="GLUTAMATE SEMIALDEHYDE DEHYDROGENASE"/>
    <property type="match status" value="1"/>
</dbReference>
<dbReference type="Pfam" id="PF00171">
    <property type="entry name" value="Aldedh"/>
    <property type="match status" value="1"/>
</dbReference>
<dbReference type="PIRSF" id="PIRSF000151">
    <property type="entry name" value="GPR"/>
    <property type="match status" value="1"/>
</dbReference>
<dbReference type="SUPFAM" id="SSF53720">
    <property type="entry name" value="ALDH-like"/>
    <property type="match status" value="1"/>
</dbReference>
<dbReference type="PROSITE" id="PS01223">
    <property type="entry name" value="PROA"/>
    <property type="match status" value="1"/>
</dbReference>
<reference key="1">
    <citation type="journal article" date="2007" name="Genome Biol.">
        <title>Characterization and modeling of the Haemophilus influenzae core and supragenomes based on the complete genomic sequences of Rd and 12 clinical nontypeable strains.</title>
        <authorList>
            <person name="Hogg J.S."/>
            <person name="Hu F.Z."/>
            <person name="Janto B."/>
            <person name="Boissy R."/>
            <person name="Hayes J."/>
            <person name="Keefe R."/>
            <person name="Post J.C."/>
            <person name="Ehrlich G.D."/>
        </authorList>
    </citation>
    <scope>NUCLEOTIDE SEQUENCE [LARGE SCALE GENOMIC DNA]</scope>
    <source>
        <strain>PittGG</strain>
    </source>
</reference>
<accession>A5UF66</accession>
<protein>
    <recommendedName>
        <fullName evidence="1">Gamma-glutamyl phosphate reductase</fullName>
        <shortName evidence="1">GPR</shortName>
        <ecNumber evidence="1">1.2.1.41</ecNumber>
    </recommendedName>
    <alternativeName>
        <fullName evidence="1">Glutamate-5-semialdehyde dehydrogenase</fullName>
    </alternativeName>
    <alternativeName>
        <fullName evidence="1">Glutamyl-gamma-semialdehyde dehydrogenase</fullName>
        <shortName evidence="1">GSA dehydrogenase</shortName>
    </alternativeName>
</protein>
<proteinExistence type="inferred from homology"/>
<organism>
    <name type="scientific">Haemophilus influenzae (strain PittGG)</name>
    <dbReference type="NCBI Taxonomy" id="374931"/>
    <lineage>
        <taxon>Bacteria</taxon>
        <taxon>Pseudomonadati</taxon>
        <taxon>Pseudomonadota</taxon>
        <taxon>Gammaproteobacteria</taxon>
        <taxon>Pasteurellales</taxon>
        <taxon>Pasteurellaceae</taxon>
        <taxon>Haemophilus</taxon>
    </lineage>
</organism>
<name>PROA_HAEIG</name>